<reference key="1">
    <citation type="journal article" date="1995" name="Microbiology">
        <title>Poly-beta-hydroxybutyrate (PHB) biosynthetic genes in Rhizobium meliloti 41.</title>
        <authorList>
            <person name="Tombolini R."/>
            <person name="Povolo S."/>
            <person name="Buson A."/>
            <person name="Squartini A."/>
            <person name="Nuti M.P."/>
        </authorList>
    </citation>
    <scope>NUCLEOTIDE SEQUENCE [GENOMIC DNA]</scope>
    <source>
        <strain>41</strain>
    </source>
</reference>
<reference key="2">
    <citation type="journal article" date="1998" name="Can. J. Microbiol.">
        <title>The phbC (poly-beta-hydroxybutyrate synthase) gene of Rhizobium (Sinorhizobium) meliloti and characterization of phbC mutants.</title>
        <authorList>
            <person name="Willis L.B."/>
            <person name="Walker G.C."/>
        </authorList>
    </citation>
    <scope>NUCLEOTIDE SEQUENCE [GENOMIC DNA]</scope>
    <source>
        <strain>1021</strain>
    </source>
</reference>
<reference key="3">
    <citation type="journal article" date="2001" name="Proc. Natl. Acad. Sci. U.S.A.">
        <title>Analysis of the chromosome sequence of the legume symbiont Sinorhizobium meliloti strain 1021.</title>
        <authorList>
            <person name="Capela D."/>
            <person name="Barloy-Hubler F."/>
            <person name="Gouzy J."/>
            <person name="Bothe G."/>
            <person name="Ampe F."/>
            <person name="Batut J."/>
            <person name="Boistard P."/>
            <person name="Becker A."/>
            <person name="Boutry M."/>
            <person name="Cadieu E."/>
            <person name="Dreano S."/>
            <person name="Gloux S."/>
            <person name="Godrie T."/>
            <person name="Goffeau A."/>
            <person name="Kahn D."/>
            <person name="Kiss E."/>
            <person name="Lelaure V."/>
            <person name="Masuy D."/>
            <person name="Pohl T."/>
            <person name="Portetelle D."/>
            <person name="Puehler A."/>
            <person name="Purnelle B."/>
            <person name="Ramsperger U."/>
            <person name="Renard C."/>
            <person name="Thebault P."/>
            <person name="Vandenbol M."/>
            <person name="Weidner S."/>
            <person name="Galibert F."/>
        </authorList>
    </citation>
    <scope>NUCLEOTIDE SEQUENCE [LARGE SCALE GENOMIC DNA]</scope>
    <source>
        <strain>1021</strain>
    </source>
</reference>
<reference key="4">
    <citation type="journal article" date="2001" name="Science">
        <title>The composite genome of the legume symbiont Sinorhizobium meliloti.</title>
        <authorList>
            <person name="Galibert F."/>
            <person name="Finan T.M."/>
            <person name="Long S.R."/>
            <person name="Puehler A."/>
            <person name="Abola P."/>
            <person name="Ampe F."/>
            <person name="Barloy-Hubler F."/>
            <person name="Barnett M.J."/>
            <person name="Becker A."/>
            <person name="Boistard P."/>
            <person name="Bothe G."/>
            <person name="Boutry M."/>
            <person name="Bowser L."/>
            <person name="Buhrmester J."/>
            <person name="Cadieu E."/>
            <person name="Capela D."/>
            <person name="Chain P."/>
            <person name="Cowie A."/>
            <person name="Davis R.W."/>
            <person name="Dreano S."/>
            <person name="Federspiel N.A."/>
            <person name="Fisher R.F."/>
            <person name="Gloux S."/>
            <person name="Godrie T."/>
            <person name="Goffeau A."/>
            <person name="Golding B."/>
            <person name="Gouzy J."/>
            <person name="Gurjal M."/>
            <person name="Hernandez-Lucas I."/>
            <person name="Hong A."/>
            <person name="Huizar L."/>
            <person name="Hyman R.W."/>
            <person name="Jones T."/>
            <person name="Kahn D."/>
            <person name="Kahn M.L."/>
            <person name="Kalman S."/>
            <person name="Keating D.H."/>
            <person name="Kiss E."/>
            <person name="Komp C."/>
            <person name="Lelaure V."/>
            <person name="Masuy D."/>
            <person name="Palm C."/>
            <person name="Peck M.C."/>
            <person name="Pohl T.M."/>
            <person name="Portetelle D."/>
            <person name="Purnelle B."/>
            <person name="Ramsperger U."/>
            <person name="Surzycki R."/>
            <person name="Thebault P."/>
            <person name="Vandenbol M."/>
            <person name="Vorhoelter F.J."/>
            <person name="Weidner S."/>
            <person name="Wells D.H."/>
            <person name="Wong K."/>
            <person name="Yeh K.-C."/>
            <person name="Batut J."/>
        </authorList>
    </citation>
    <scope>NUCLEOTIDE SEQUENCE [LARGE SCALE GENOMIC DNA]</scope>
    <source>
        <strain>1021</strain>
    </source>
</reference>
<sequence length="611" mass="68040">MTAEKAEGATGFAGFDPKSVEPYIVKDPESLAINMARAAEQLGKAASAWLAPREAGEKTDSFAEPVSDMVKTLSKVSEYWLSDPRRTLEAQTHLLGSFFDMWSRTLQRMAGDAVEDPANLQRNDKRFADEDWVKNPFFDFIRQAYFVTSDWAERMVRDAEGLDDHTRHKAAFYVRQIASALSPTNFITTNPQLYRETVASSGANLVKGMQMLAEDIAAGRGELRLRQTDTSKFAIGENIAITPGKVIAQNDVCQVLQYEASTETVLKRPLLICPPWINKFYVLDLNPEKSFIKWAVDQGQTVFVISWVNPDERHASKDWEAYAREGIGFALDIIEQATGEREVNSIGYCVGGTLLAATLALHAAEGDERIRSATLFTTQVDFTHAGDLKVFVDDDQIRHLEANMSATGYLEGSKMASAFNMLRASELIWPYFVNNYLKGQDPLPFDLLYWNSDSTRMPAANHSFYLRNCYLENRLSKGEMVLAGRRVSLGDVKIPIYNLATKEDHIAPAKSVFLGSSSFGGKVTFVLSGSGHIAGVVNPPARSKYQYWTGGAPKGDIETWMGKAKETAGSWWPHWQGWVERLDKRRVPARKAGGPLNSIEEAPGSYVRVRA</sequence>
<gene>
    <name evidence="3" type="primary">phaC</name>
    <name evidence="4" type="synonym">phbC</name>
    <name type="ordered locus">R01725</name>
    <name type="ORF">SMc00296</name>
</gene>
<name>PHAC_RHIME</name>
<proteinExistence type="inferred from homology"/>
<protein>
    <recommendedName>
        <fullName>Poly(3-hydroxyalkanoate) polymerase subunit PhaC</fullName>
        <shortName>PHA polymerase</shortName>
        <ecNumber>2.3.1.-</ecNumber>
    </recommendedName>
    <alternativeName>
        <fullName>PHB synthase subunit PhaC</fullName>
    </alternativeName>
    <alternativeName>
        <fullName>Poly(3-hydroxybutyrate) polymerase subunit PhaC</fullName>
        <shortName>PHB polymerase</shortName>
        <shortName>Poly-beta-hydroxybutyrate polymerase</shortName>
    </alternativeName>
    <alternativeName>
        <fullName>Polyhydroxyalkanoic acid synthase subunit PhaC</fullName>
        <shortName>PHA synthase</shortName>
    </alternativeName>
</protein>
<keyword id="KW-0012">Acyltransferase</keyword>
<keyword id="KW-0963">Cytoplasm</keyword>
<keyword id="KW-0583">PHB biosynthesis</keyword>
<keyword id="KW-1185">Reference proteome</keyword>
<keyword id="KW-0808">Transferase</keyword>
<comment type="function">
    <text>Polymerizes D(-)-3-hydroxybutyryl-CoA to create PHB which consists of thousands of hydroxybutyrate molecules linked end to end. PHB serves as an intracellular energy reserve material when cells grow under conditions of nutrient limitation.</text>
</comment>
<comment type="catalytic activity">
    <reaction evidence="1">
        <text>(3R)-3-hydroxybutanoyl-CoA + [(3R)-hydroxybutanoate](n) = [(3R)-hydroxybutanoate](n+1) + CoA</text>
        <dbReference type="Rhea" id="RHEA:15405"/>
        <dbReference type="Rhea" id="RHEA-COMP:14464"/>
        <dbReference type="Rhea" id="RHEA-COMP:14465"/>
        <dbReference type="ChEBI" id="CHEBI:8298"/>
        <dbReference type="ChEBI" id="CHEBI:57287"/>
        <dbReference type="ChEBI" id="CHEBI:57315"/>
    </reaction>
</comment>
<comment type="pathway">
    <text>Biopolymer metabolism; poly-(R)-3-hydroxybutanoate biosynthesis.</text>
</comment>
<comment type="subunit">
    <text evidence="5">Monomer.</text>
</comment>
<comment type="subcellular location">
    <subcellularLocation>
        <location>Cytoplasm</location>
    </subcellularLocation>
</comment>
<comment type="similarity">
    <text evidence="5">Belongs to the PHA/PHB synthase family. Type I PhaC subfamily.</text>
</comment>
<comment type="sequence caution" evidence="5">
    <conflict type="erroneous initiation">
        <sequence resource="EMBL-CDS" id="AAA90984"/>
    </conflict>
    <text>Truncated N-terminus.</text>
</comment>
<dbReference type="EC" id="2.3.1.-"/>
<dbReference type="EMBL" id="U17227">
    <property type="protein sequence ID" value="AAA90984.1"/>
    <property type="status" value="ALT_INIT"/>
    <property type="molecule type" value="Genomic_DNA"/>
</dbReference>
<dbReference type="EMBL" id="AF031938">
    <property type="protein sequence ID" value="AAC61899.1"/>
    <property type="molecule type" value="Genomic_DNA"/>
</dbReference>
<dbReference type="EMBL" id="AL591688">
    <property type="protein sequence ID" value="CAC46304.1"/>
    <property type="molecule type" value="Genomic_DNA"/>
</dbReference>
<dbReference type="RefSeq" id="NP_385831.1">
    <property type="nucleotide sequence ID" value="NC_003047.1"/>
</dbReference>
<dbReference type="RefSeq" id="WP_010969425.1">
    <property type="nucleotide sequence ID" value="NC_003047.1"/>
</dbReference>
<dbReference type="SMR" id="P50176"/>
<dbReference type="ESTHER" id="rhime-phbc">
    <property type="family name" value="PHA_synth_I"/>
</dbReference>
<dbReference type="EnsemblBacteria" id="CAC46304">
    <property type="protein sequence ID" value="CAC46304"/>
    <property type="gene ID" value="SMc00296"/>
</dbReference>
<dbReference type="KEGG" id="sme:SMc00296"/>
<dbReference type="PATRIC" id="fig|266834.11.peg.3163"/>
<dbReference type="eggNOG" id="COG3243">
    <property type="taxonomic scope" value="Bacteria"/>
</dbReference>
<dbReference type="HOGENOM" id="CLU_017387_1_0_5"/>
<dbReference type="OrthoDB" id="7208816at2"/>
<dbReference type="UniPathway" id="UPA00917"/>
<dbReference type="Proteomes" id="UP000001976">
    <property type="component" value="Chromosome"/>
</dbReference>
<dbReference type="GO" id="GO:0005737">
    <property type="term" value="C:cytoplasm"/>
    <property type="evidence" value="ECO:0007669"/>
    <property type="project" value="UniProtKB-SubCell"/>
</dbReference>
<dbReference type="GO" id="GO:0016746">
    <property type="term" value="F:acyltransferase activity"/>
    <property type="evidence" value="ECO:0007669"/>
    <property type="project" value="UniProtKB-KW"/>
</dbReference>
<dbReference type="GO" id="GO:0042619">
    <property type="term" value="P:poly-hydroxybutyrate biosynthetic process"/>
    <property type="evidence" value="ECO:0007669"/>
    <property type="project" value="UniProtKB-KW"/>
</dbReference>
<dbReference type="Gene3D" id="3.40.50.1820">
    <property type="entry name" value="alpha/beta hydrolase"/>
    <property type="match status" value="1"/>
</dbReference>
<dbReference type="InterPro" id="IPR029058">
    <property type="entry name" value="AB_hydrolase_fold"/>
</dbReference>
<dbReference type="InterPro" id="IPR051321">
    <property type="entry name" value="PHA/PHB_synthase"/>
</dbReference>
<dbReference type="InterPro" id="IPR010963">
    <property type="entry name" value="PHA_synth_I"/>
</dbReference>
<dbReference type="InterPro" id="IPR010941">
    <property type="entry name" value="PhaC_N"/>
</dbReference>
<dbReference type="NCBIfam" id="TIGR01838">
    <property type="entry name" value="PHA_synth_I"/>
    <property type="match status" value="1"/>
</dbReference>
<dbReference type="PANTHER" id="PTHR36837">
    <property type="entry name" value="POLY(3-HYDROXYALKANOATE) POLYMERASE SUBUNIT PHAC"/>
    <property type="match status" value="1"/>
</dbReference>
<dbReference type="PANTHER" id="PTHR36837:SF5">
    <property type="entry name" value="POLY-3-HYDROXYBUTYRATE SYNTHASE"/>
    <property type="match status" value="1"/>
</dbReference>
<dbReference type="Pfam" id="PF07167">
    <property type="entry name" value="PhaC_N"/>
    <property type="match status" value="1"/>
</dbReference>
<dbReference type="SUPFAM" id="SSF53474">
    <property type="entry name" value="alpha/beta-Hydrolases"/>
    <property type="match status" value="1"/>
</dbReference>
<evidence type="ECO:0000250" key="1">
    <source>
        <dbReference type="UniProtKB" id="P45370"/>
    </source>
</evidence>
<evidence type="ECO:0000255" key="2"/>
<evidence type="ECO:0000303" key="3">
    <source>
    </source>
</evidence>
<evidence type="ECO:0000303" key="4">
    <source>
    </source>
</evidence>
<evidence type="ECO:0000305" key="5"/>
<feature type="chain" id="PRO_0000215472" description="Poly(3-hydroxyalkanoate) polymerase subunit PhaC">
    <location>
        <begin position="1"/>
        <end position="611"/>
    </location>
</feature>
<feature type="active site" evidence="2">
    <location>
        <position position="349"/>
    </location>
</feature>
<feature type="sequence conflict" description="In Ref. 1; AAA90984." evidence="5" ref="1">
    <original>G</original>
    <variation>A</variation>
    <location>
        <position position="111"/>
    </location>
</feature>
<feature type="sequence conflict" description="In Ref. 1; AAA90984." evidence="5" ref="1">
    <original>R</original>
    <variation>H</variation>
    <location>
        <position position="122"/>
    </location>
</feature>
<feature type="sequence conflict" description="In Ref. 1; AAA90984." evidence="5" ref="1">
    <original>R</original>
    <variation>K</variation>
    <location>
        <position position="157"/>
    </location>
</feature>
<feature type="sequence conflict" description="In Ref. 1; AAA90984." evidence="5" ref="1">
    <original>K</original>
    <variation>R</variation>
    <location>
        <position position="477"/>
    </location>
</feature>
<feature type="sequence conflict" description="In Ref. 1; AAA90984." evidence="5" ref="1">
    <original>V</original>
    <variation>M</variation>
    <location>
        <position position="481"/>
    </location>
</feature>
<organism>
    <name type="scientific">Rhizobium meliloti (strain 1021)</name>
    <name type="common">Ensifer meliloti</name>
    <name type="synonym">Sinorhizobium meliloti</name>
    <dbReference type="NCBI Taxonomy" id="266834"/>
    <lineage>
        <taxon>Bacteria</taxon>
        <taxon>Pseudomonadati</taxon>
        <taxon>Pseudomonadota</taxon>
        <taxon>Alphaproteobacteria</taxon>
        <taxon>Hyphomicrobiales</taxon>
        <taxon>Rhizobiaceae</taxon>
        <taxon>Sinorhizobium/Ensifer group</taxon>
        <taxon>Sinorhizobium</taxon>
    </lineage>
</organism>
<accession>P50176</accession>
<accession>O87321</accession>